<organism>
    <name type="scientific">Oryza sativa subsp. japonica</name>
    <name type="common">Rice</name>
    <dbReference type="NCBI Taxonomy" id="39947"/>
    <lineage>
        <taxon>Eukaryota</taxon>
        <taxon>Viridiplantae</taxon>
        <taxon>Streptophyta</taxon>
        <taxon>Embryophyta</taxon>
        <taxon>Tracheophyta</taxon>
        <taxon>Spermatophyta</taxon>
        <taxon>Magnoliopsida</taxon>
        <taxon>Liliopsida</taxon>
        <taxon>Poales</taxon>
        <taxon>Poaceae</taxon>
        <taxon>BOP clade</taxon>
        <taxon>Oryzoideae</taxon>
        <taxon>Oryzeae</taxon>
        <taxon>Oryzinae</taxon>
        <taxon>Oryza</taxon>
        <taxon>Oryza sativa</taxon>
    </lineage>
</organism>
<accession>Q60E34</accession>
<accession>A0A0P0WJC6</accession>
<accession>Q6I5W1</accession>
<protein>
    <recommendedName>
        <fullName>BURP domain-containing protein 7</fullName>
        <shortName>OsBURP07</shortName>
    </recommendedName>
</protein>
<feature type="signal peptide" evidence="1">
    <location>
        <begin position="1"/>
        <end position="21"/>
    </location>
</feature>
<feature type="chain" id="PRO_0000375834" description="BURP domain-containing protein 7">
    <location>
        <begin position="22"/>
        <end position="181"/>
    </location>
</feature>
<feature type="domain" description="BURP" evidence="2">
    <location>
        <begin position="65"/>
        <end position="181"/>
    </location>
</feature>
<feature type="region of interest" description="Disordered" evidence="3">
    <location>
        <begin position="112"/>
        <end position="181"/>
    </location>
</feature>
<feature type="compositionally biased region" description="Basic residues" evidence="3">
    <location>
        <begin position="128"/>
        <end position="143"/>
    </location>
</feature>
<feature type="compositionally biased region" description="Low complexity" evidence="3">
    <location>
        <begin position="144"/>
        <end position="157"/>
    </location>
</feature>
<feature type="compositionally biased region" description="Basic residues" evidence="3">
    <location>
        <begin position="170"/>
        <end position="181"/>
    </location>
</feature>
<sequence length="181" mass="19203">MARSLAALLLLLVAAAGDSHAASPAEMYWKIALPTSPMPGAIRDLINPASSAGSASKEDTVGNVFFLEKDLFPGSKLTLHFTRATAGAALLPRGRADSVPLATEKLPEILSQLSVPAGSPAADAMSARPRRSPARRSNARRRSSPWWSSPRPASAPATCTPCPRRSTGQGRRRGRRTGWRP</sequence>
<gene>
    <name type="primary">BURP7</name>
    <name type="ordered locus">Os05g0217700</name>
    <name type="ordered locus">LOC_Os05g12630</name>
    <name type="ORF">OJ1076_H08.14</name>
    <name type="ORF">OsJ_17568</name>
    <name type="ORF">OSJNBb0012L23.3</name>
</gene>
<evidence type="ECO:0000255" key="1"/>
<evidence type="ECO:0000255" key="2">
    <source>
        <dbReference type="PROSITE-ProRule" id="PRU00604"/>
    </source>
</evidence>
<evidence type="ECO:0000256" key="3">
    <source>
        <dbReference type="SAM" id="MobiDB-lite"/>
    </source>
</evidence>
<evidence type="ECO:0000269" key="4">
    <source>
    </source>
</evidence>
<evidence type="ECO:0000305" key="5"/>
<name>BURP7_ORYSJ</name>
<keyword id="KW-1185">Reference proteome</keyword>
<keyword id="KW-0732">Signal</keyword>
<reference key="1">
    <citation type="journal article" date="2005" name="Mol. Genet. Genomics">
        <title>A fine physical map of the rice chromosome 5.</title>
        <authorList>
            <person name="Cheng C.-H."/>
            <person name="Chung M.C."/>
            <person name="Liu S.-M."/>
            <person name="Chen S.-K."/>
            <person name="Kao F.Y."/>
            <person name="Lin S.-J."/>
            <person name="Hsiao S.-H."/>
            <person name="Tseng I.C."/>
            <person name="Hsing Y.-I.C."/>
            <person name="Wu H.-P."/>
            <person name="Chen C.-S."/>
            <person name="Shaw J.-F."/>
            <person name="Wu J."/>
            <person name="Matsumoto T."/>
            <person name="Sasaki T."/>
            <person name="Chen H.-C."/>
            <person name="Chow T.-Y."/>
        </authorList>
    </citation>
    <scope>NUCLEOTIDE SEQUENCE [LARGE SCALE GENOMIC DNA]</scope>
    <source>
        <strain>cv. Nipponbare</strain>
    </source>
</reference>
<reference key="2">
    <citation type="journal article" date="2005" name="Nature">
        <title>The map-based sequence of the rice genome.</title>
        <authorList>
            <consortium name="International rice genome sequencing project (IRGSP)"/>
        </authorList>
    </citation>
    <scope>NUCLEOTIDE SEQUENCE [LARGE SCALE GENOMIC DNA]</scope>
    <source>
        <strain>cv. Nipponbare</strain>
    </source>
</reference>
<reference key="3">
    <citation type="journal article" date="2008" name="Nucleic Acids Res.">
        <title>The rice annotation project database (RAP-DB): 2008 update.</title>
        <authorList>
            <consortium name="The rice annotation project (RAP)"/>
        </authorList>
    </citation>
    <scope>GENOME REANNOTATION</scope>
    <source>
        <strain>cv. Nipponbare</strain>
    </source>
</reference>
<reference key="4">
    <citation type="journal article" date="2013" name="Rice">
        <title>Improvement of the Oryza sativa Nipponbare reference genome using next generation sequence and optical map data.</title>
        <authorList>
            <person name="Kawahara Y."/>
            <person name="de la Bastide M."/>
            <person name="Hamilton J.P."/>
            <person name="Kanamori H."/>
            <person name="McCombie W.R."/>
            <person name="Ouyang S."/>
            <person name="Schwartz D.C."/>
            <person name="Tanaka T."/>
            <person name="Wu J."/>
            <person name="Zhou S."/>
            <person name="Childs K.L."/>
            <person name="Davidson R.M."/>
            <person name="Lin H."/>
            <person name="Quesada-Ocampo L."/>
            <person name="Vaillancourt B."/>
            <person name="Sakai H."/>
            <person name="Lee S.S."/>
            <person name="Kim J."/>
            <person name="Numa H."/>
            <person name="Itoh T."/>
            <person name="Buell C.R."/>
            <person name="Matsumoto T."/>
        </authorList>
    </citation>
    <scope>GENOME REANNOTATION</scope>
    <source>
        <strain>cv. Nipponbare</strain>
    </source>
</reference>
<reference key="5">
    <citation type="journal article" date="2005" name="PLoS Biol.">
        <title>The genomes of Oryza sativa: a history of duplications.</title>
        <authorList>
            <person name="Yu J."/>
            <person name="Wang J."/>
            <person name="Lin W."/>
            <person name="Li S."/>
            <person name="Li H."/>
            <person name="Zhou J."/>
            <person name="Ni P."/>
            <person name="Dong W."/>
            <person name="Hu S."/>
            <person name="Zeng C."/>
            <person name="Zhang J."/>
            <person name="Zhang Y."/>
            <person name="Li R."/>
            <person name="Xu Z."/>
            <person name="Li S."/>
            <person name="Li X."/>
            <person name="Zheng H."/>
            <person name="Cong L."/>
            <person name="Lin L."/>
            <person name="Yin J."/>
            <person name="Geng J."/>
            <person name="Li G."/>
            <person name="Shi J."/>
            <person name="Liu J."/>
            <person name="Lv H."/>
            <person name="Li J."/>
            <person name="Wang J."/>
            <person name="Deng Y."/>
            <person name="Ran L."/>
            <person name="Shi X."/>
            <person name="Wang X."/>
            <person name="Wu Q."/>
            <person name="Li C."/>
            <person name="Ren X."/>
            <person name="Wang J."/>
            <person name="Wang X."/>
            <person name="Li D."/>
            <person name="Liu D."/>
            <person name="Zhang X."/>
            <person name="Ji Z."/>
            <person name="Zhao W."/>
            <person name="Sun Y."/>
            <person name="Zhang Z."/>
            <person name="Bao J."/>
            <person name="Han Y."/>
            <person name="Dong L."/>
            <person name="Ji J."/>
            <person name="Chen P."/>
            <person name="Wu S."/>
            <person name="Liu J."/>
            <person name="Xiao Y."/>
            <person name="Bu D."/>
            <person name="Tan J."/>
            <person name="Yang L."/>
            <person name="Ye C."/>
            <person name="Zhang J."/>
            <person name="Xu J."/>
            <person name="Zhou Y."/>
            <person name="Yu Y."/>
            <person name="Zhang B."/>
            <person name="Zhuang S."/>
            <person name="Wei H."/>
            <person name="Liu B."/>
            <person name="Lei M."/>
            <person name="Yu H."/>
            <person name="Li Y."/>
            <person name="Xu H."/>
            <person name="Wei S."/>
            <person name="He X."/>
            <person name="Fang L."/>
            <person name="Zhang Z."/>
            <person name="Zhang Y."/>
            <person name="Huang X."/>
            <person name="Su Z."/>
            <person name="Tong W."/>
            <person name="Li J."/>
            <person name="Tong Z."/>
            <person name="Li S."/>
            <person name="Ye J."/>
            <person name="Wang L."/>
            <person name="Fang L."/>
            <person name="Lei T."/>
            <person name="Chen C.-S."/>
            <person name="Chen H.-C."/>
            <person name="Xu Z."/>
            <person name="Li H."/>
            <person name="Huang H."/>
            <person name="Zhang F."/>
            <person name="Xu H."/>
            <person name="Li N."/>
            <person name="Zhao C."/>
            <person name="Li S."/>
            <person name="Dong L."/>
            <person name="Huang Y."/>
            <person name="Li L."/>
            <person name="Xi Y."/>
            <person name="Qi Q."/>
            <person name="Li W."/>
            <person name="Zhang B."/>
            <person name="Hu W."/>
            <person name="Zhang Y."/>
            <person name="Tian X."/>
            <person name="Jiao Y."/>
            <person name="Liang X."/>
            <person name="Jin J."/>
            <person name="Gao L."/>
            <person name="Zheng W."/>
            <person name="Hao B."/>
            <person name="Liu S.-M."/>
            <person name="Wang W."/>
            <person name="Yuan L."/>
            <person name="Cao M."/>
            <person name="McDermott J."/>
            <person name="Samudrala R."/>
            <person name="Wang J."/>
            <person name="Wong G.K.-S."/>
            <person name="Yang H."/>
        </authorList>
    </citation>
    <scope>NUCLEOTIDE SEQUENCE [LARGE SCALE GENOMIC DNA]</scope>
    <source>
        <strain>cv. Nipponbare</strain>
    </source>
</reference>
<reference key="6">
    <citation type="journal article" date="2003" name="Science">
        <title>Collection, mapping, and annotation of over 28,000 cDNA clones from japonica rice.</title>
        <authorList>
            <consortium name="The rice full-length cDNA consortium"/>
        </authorList>
    </citation>
    <scope>NUCLEOTIDE SEQUENCE [LARGE SCALE MRNA]</scope>
    <source>
        <strain>cv. Nipponbare</strain>
    </source>
</reference>
<reference key="7">
    <citation type="journal article" date="2009" name="Planta">
        <title>Genome-wide identification of BURP domain-containing genes in rice reveals a gene family with diverse structures and responses to abiotic stresses.</title>
        <authorList>
            <person name="Ding X."/>
            <person name="Hou X."/>
            <person name="Xie K."/>
            <person name="Xiong L."/>
        </authorList>
    </citation>
    <scope>TISSUE SPECIFICITY</scope>
    <scope>GENE NOMENCLATURE</scope>
</reference>
<proteinExistence type="evidence at transcript level"/>
<dbReference type="EMBL" id="AC108498">
    <property type="protein sequence ID" value="AAT47026.1"/>
    <property type="status" value="ALT_SEQ"/>
    <property type="molecule type" value="Genomic_DNA"/>
</dbReference>
<dbReference type="EMBL" id="AC137001">
    <property type="protein sequence ID" value="AAV25277.1"/>
    <property type="molecule type" value="Genomic_DNA"/>
</dbReference>
<dbReference type="EMBL" id="AP008211">
    <property type="protein sequence ID" value="BAF16851.1"/>
    <property type="molecule type" value="Genomic_DNA"/>
</dbReference>
<dbReference type="EMBL" id="AP014961">
    <property type="protein sequence ID" value="BAS92842.1"/>
    <property type="molecule type" value="Genomic_DNA"/>
</dbReference>
<dbReference type="EMBL" id="CM000142">
    <property type="protein sequence ID" value="EEE62765.1"/>
    <property type="molecule type" value="Genomic_DNA"/>
</dbReference>
<dbReference type="EMBL" id="AK061473">
    <property type="protein sequence ID" value="BAG87952.1"/>
    <property type="molecule type" value="mRNA"/>
</dbReference>
<dbReference type="EMBL" id="AK105947">
    <property type="protein sequence ID" value="BAG97457.1"/>
    <property type="molecule type" value="mRNA"/>
</dbReference>
<dbReference type="EMBL" id="AK109427">
    <property type="protein sequence ID" value="BAG98740.1"/>
    <property type="molecule type" value="mRNA"/>
</dbReference>
<dbReference type="PaxDb" id="39947-Q60E34"/>
<dbReference type="EnsemblPlants" id="Os05t0217700-01">
    <property type="protein sequence ID" value="Os05t0217700-01"/>
    <property type="gene ID" value="Os05g0217700"/>
</dbReference>
<dbReference type="Gramene" id="Os05t0217700-01">
    <property type="protein sequence ID" value="Os05t0217700-01"/>
    <property type="gene ID" value="Os05g0217700"/>
</dbReference>
<dbReference type="KEGG" id="dosa:Os05g0217700"/>
<dbReference type="HOGENOM" id="CLU_110891_0_0_1"/>
<dbReference type="InParanoid" id="Q60E34"/>
<dbReference type="OMA" id="IEGHHAS"/>
<dbReference type="Proteomes" id="UP000000763">
    <property type="component" value="Chromosome 5"/>
</dbReference>
<dbReference type="Proteomes" id="UP000007752">
    <property type="component" value="Chromosome 5"/>
</dbReference>
<dbReference type="Proteomes" id="UP000059680">
    <property type="component" value="Chromosome 5"/>
</dbReference>
<dbReference type="InterPro" id="IPR044816">
    <property type="entry name" value="BURP"/>
</dbReference>
<dbReference type="InterPro" id="IPR004873">
    <property type="entry name" value="BURP_dom"/>
</dbReference>
<dbReference type="PANTHER" id="PTHR31236">
    <property type="entry name" value="BURP DOMAIN PROTEIN USPL1-LIKE"/>
    <property type="match status" value="1"/>
</dbReference>
<dbReference type="PANTHER" id="PTHR31236:SF31">
    <property type="entry name" value="BURP DOMAIN-CONTAINING PROTEIN 7"/>
    <property type="match status" value="1"/>
</dbReference>
<dbReference type="Pfam" id="PF03181">
    <property type="entry name" value="BURP"/>
    <property type="match status" value="1"/>
</dbReference>
<dbReference type="PROSITE" id="PS51277">
    <property type="entry name" value="BURP"/>
    <property type="match status" value="1"/>
</dbReference>
<comment type="tissue specificity">
    <text evidence="4">Expressed in roots, stems, leaves and shoot.</text>
</comment>
<comment type="sequence caution" evidence="5">
    <conflict type="erroneous gene model prediction">
        <sequence resource="EMBL-CDS" id="AAT47026"/>
    </conflict>
</comment>